<comment type="function">
    <text evidence="2 3">Component of the serine palmitoyltransferase multisubunit enzyme (SPT) that catalyzes the initial and rate-limiting step in sphingolipid biosynthesis by condensing L-serine and activated acyl-CoA (most commonly palmitoyl-CoA) to form long-chain bases. The SPT complex is also composed of SPTLC2 or SPTLC3 and SPTSSA or SPTSSB. Within this complex, the heterodimer with SPTLC2 or SPTLC3 forms the catalytic core. The composition of the serine palmitoyltransferase (SPT) complex determines the substrate preference. The SPTLC1-SPTLC2-SPTSSA complex shows a strong preference for C16-CoA substrate, while the SPTLC1-SPTLC3-SPTSSA isozyme uses both C14-CoA and C16-CoA as substrates, with a slight preference for C14-CoA. The SPTLC1-SPTLC2-SPTSSB complex shows a strong preference for C18-CoA substrate, while the SPTLC1-SPTLC3-SPTSSB isozyme displays an ability to use a broader range of acyl-CoAs, without apparent preference (By similarity). Required for adipocyte cell viability and metabolic homeostasis (By similarity).</text>
</comment>
<comment type="catalytic activity">
    <reaction evidence="2">
        <text>L-serine + hexadecanoyl-CoA + H(+) = 3-oxosphinganine + CO2 + CoA</text>
        <dbReference type="Rhea" id="RHEA:14761"/>
        <dbReference type="ChEBI" id="CHEBI:15378"/>
        <dbReference type="ChEBI" id="CHEBI:16526"/>
        <dbReference type="ChEBI" id="CHEBI:33384"/>
        <dbReference type="ChEBI" id="CHEBI:57287"/>
        <dbReference type="ChEBI" id="CHEBI:57379"/>
        <dbReference type="ChEBI" id="CHEBI:58299"/>
        <dbReference type="EC" id="2.3.1.50"/>
    </reaction>
    <physiologicalReaction direction="left-to-right" evidence="2">
        <dbReference type="Rhea" id="RHEA:14762"/>
    </physiologicalReaction>
</comment>
<comment type="catalytic activity">
    <reaction evidence="2">
        <text>octadecanoyl-CoA + L-serine + H(+) = 3-oxoeicosasphinganine + CO2 + CoA</text>
        <dbReference type="Rhea" id="RHEA:33683"/>
        <dbReference type="ChEBI" id="CHEBI:15378"/>
        <dbReference type="ChEBI" id="CHEBI:16526"/>
        <dbReference type="ChEBI" id="CHEBI:33384"/>
        <dbReference type="ChEBI" id="CHEBI:57287"/>
        <dbReference type="ChEBI" id="CHEBI:57394"/>
        <dbReference type="ChEBI" id="CHEBI:65073"/>
    </reaction>
    <physiologicalReaction direction="left-to-right" evidence="2">
        <dbReference type="Rhea" id="RHEA:33684"/>
    </physiologicalReaction>
</comment>
<comment type="catalytic activity">
    <reaction evidence="2">
        <text>tetradecanoyl-CoA + L-serine + H(+) = 3-oxohexadecasphinganine + CO2 + CoA</text>
        <dbReference type="Rhea" id="RHEA:35675"/>
        <dbReference type="ChEBI" id="CHEBI:15378"/>
        <dbReference type="ChEBI" id="CHEBI:16526"/>
        <dbReference type="ChEBI" id="CHEBI:33384"/>
        <dbReference type="ChEBI" id="CHEBI:57287"/>
        <dbReference type="ChEBI" id="CHEBI:57385"/>
        <dbReference type="ChEBI" id="CHEBI:71007"/>
    </reaction>
    <physiologicalReaction direction="left-to-right" evidence="2">
        <dbReference type="Rhea" id="RHEA:35676"/>
    </physiologicalReaction>
</comment>
<comment type="catalytic activity">
    <reaction evidence="2">
        <text>dodecanoyl-CoA + L-serine + H(+) = 3-oxotetradecasphinganine + CO2 + CoA</text>
        <dbReference type="Rhea" id="RHEA:35679"/>
        <dbReference type="ChEBI" id="CHEBI:15378"/>
        <dbReference type="ChEBI" id="CHEBI:16526"/>
        <dbReference type="ChEBI" id="CHEBI:33384"/>
        <dbReference type="ChEBI" id="CHEBI:57287"/>
        <dbReference type="ChEBI" id="CHEBI:57375"/>
        <dbReference type="ChEBI" id="CHEBI:71008"/>
    </reaction>
    <physiologicalReaction direction="left-to-right" evidence="2">
        <dbReference type="Rhea" id="RHEA:35680"/>
    </physiologicalReaction>
</comment>
<comment type="cofactor">
    <cofactor evidence="1">
        <name>pyridoxal 5'-phosphate</name>
        <dbReference type="ChEBI" id="CHEBI:597326"/>
    </cofactor>
</comment>
<comment type="activity regulation">
    <text evidence="2 4">SPT complex catalytic activity is negatively regulated by ORMDL proteins, including ORMDL3, in the presence of ceramides (By similarity). This mechanism allows to maintain ceramide levels at sufficient concentrations for the production of complex sphingolipids, but which prevents the accumulation of ceramides to levels that trigger apoptosis (By similarity).</text>
</comment>
<comment type="pathway">
    <text>Lipid metabolism; sphingolipid metabolism.</text>
</comment>
<comment type="subunit">
    <text evidence="2 3">Component of the serine palmitoyltransferase (SPT) complex, which is also composed of SPTLC2 or SPTLC3 and SPTSSA or SPTSSB. The heterodimer with SPTLC2 or SPTLC3 forms the catalytic core of the enzyme, while SPTSSA or SPTSSB subunits determine substrate specificity. SPT also interacts with ORMDL proteins, especially ORMDL3, which negatively regulate SPT activity in the presence of ceramides. Forms dimers of heterodimers with SPTLC2 (By similarity). Interacts with RTN4 (By similarity).</text>
</comment>
<comment type="subcellular location">
    <subcellularLocation>
        <location evidence="3">Endoplasmic reticulum membrane</location>
        <topology evidence="3">Single-pass membrane protein</topology>
    </subcellularLocation>
</comment>
<comment type="domain">
    <text evidence="2">The transmembrane domain is involved in the interaction with ORMDL3.</text>
</comment>
<comment type="PTM">
    <text evidence="2">Phosphorylation at Tyr-164 inhibits activity and promotes cell survival.</text>
</comment>
<comment type="similarity">
    <text evidence="6">Belongs to the class-II pyridoxal-phosphate-dependent aminotransferase family.</text>
</comment>
<sequence>MATATEQWVLVEMVQALYEAPAYHLILEGILILWIIRLLFSKTYKLQERSDLTVKEKEELIEEWQPEPLVPPVPKDHPALNYNIVSGPPSHKIVVNGKECINFASFNFLGLLDNPRVKAAALASLKKYGVGTCGPRGFYGTFDVHLDLEDRLAKFMKTEEAIIYSYGFATIASAIPAYSKRGDIVFVDRAACFAIQKGLQASRSDIKLFKHNDMADLERLLKEQEIEDQKNPRKARVTRRFIVVEGLYMNTGTICPLPELVKLKYKYKARIFLEESLSFGVLGEHGRGVTEHYGINIDDIDLISANMENALASIGGFCCGRSFVIDHQRLSGQGYCFSASLPPLLAAAAIEALNIMEENPGIFAVLKEKCRQIHKALQGISGLKVVGESLSPAFHLQLEESTGSREQDVRLLQEIVDQCMDRSIALTQARYLEKEEKCLPPPSIRVVVTVEQTAEELERAASTIKEVAQAVLL</sequence>
<reference key="1">
    <citation type="submission" date="2003-10" db="EMBL/GenBank/DDBJ databases">
        <title>Isolation and characterization of cDNA for macaque neurological disease genes.</title>
        <authorList>
            <person name="Kusuda J."/>
            <person name="Osada N."/>
            <person name="Tanuma R."/>
            <person name="Hirata M."/>
            <person name="Sugano S."/>
            <person name="Hashimoto K."/>
        </authorList>
    </citation>
    <scope>NUCLEOTIDE SEQUENCE [LARGE SCALE MRNA]</scope>
    <source>
        <tissue>Temporal cortex</tissue>
    </source>
</reference>
<name>SPTC1_MACFA</name>
<proteinExistence type="evidence at transcript level"/>
<keyword id="KW-0012">Acyltransferase</keyword>
<keyword id="KW-0256">Endoplasmic reticulum</keyword>
<keyword id="KW-0443">Lipid metabolism</keyword>
<keyword id="KW-0472">Membrane</keyword>
<keyword id="KW-0597">Phosphoprotein</keyword>
<keyword id="KW-0663">Pyridoxal phosphate</keyword>
<keyword id="KW-1185">Reference proteome</keyword>
<keyword id="KW-0746">Sphingolipid metabolism</keyword>
<keyword id="KW-0808">Transferase</keyword>
<keyword id="KW-0812">Transmembrane</keyword>
<keyword id="KW-1133">Transmembrane helix</keyword>
<dbReference type="EC" id="2.3.1.50" evidence="2"/>
<dbReference type="EMBL" id="AB125196">
    <property type="protein sequence ID" value="BAD51984.1"/>
    <property type="molecule type" value="mRNA"/>
</dbReference>
<dbReference type="SMR" id="Q60HD1"/>
<dbReference type="STRING" id="9541.ENSMFAP00000013660"/>
<dbReference type="eggNOG" id="KOG1358">
    <property type="taxonomic scope" value="Eukaryota"/>
</dbReference>
<dbReference type="UniPathway" id="UPA00222"/>
<dbReference type="Proteomes" id="UP000233100">
    <property type="component" value="Unplaced"/>
</dbReference>
<dbReference type="GO" id="GO:0005789">
    <property type="term" value="C:endoplasmic reticulum membrane"/>
    <property type="evidence" value="ECO:0007669"/>
    <property type="project" value="UniProtKB-SubCell"/>
</dbReference>
<dbReference type="GO" id="GO:0017059">
    <property type="term" value="C:serine palmitoyltransferase complex"/>
    <property type="evidence" value="ECO:0000250"/>
    <property type="project" value="UniProtKB"/>
</dbReference>
<dbReference type="GO" id="GO:0030170">
    <property type="term" value="F:pyridoxal phosphate binding"/>
    <property type="evidence" value="ECO:0007669"/>
    <property type="project" value="InterPro"/>
</dbReference>
<dbReference type="GO" id="GO:0004758">
    <property type="term" value="F:serine C-palmitoyltransferase activity"/>
    <property type="evidence" value="ECO:0000250"/>
    <property type="project" value="UniProtKB"/>
</dbReference>
<dbReference type="GO" id="GO:0046513">
    <property type="term" value="P:ceramide biosynthetic process"/>
    <property type="evidence" value="ECO:0007669"/>
    <property type="project" value="TreeGrafter"/>
</dbReference>
<dbReference type="GO" id="GO:1904649">
    <property type="term" value="P:regulation of fat cell apoptotic process"/>
    <property type="evidence" value="ECO:0000250"/>
    <property type="project" value="UniProtKB"/>
</dbReference>
<dbReference type="GO" id="GO:0006665">
    <property type="term" value="P:sphingolipid metabolic process"/>
    <property type="evidence" value="ECO:0000250"/>
    <property type="project" value="UniProtKB"/>
</dbReference>
<dbReference type="GO" id="GO:0046512">
    <property type="term" value="P:sphingosine biosynthetic process"/>
    <property type="evidence" value="ECO:0007669"/>
    <property type="project" value="TreeGrafter"/>
</dbReference>
<dbReference type="FunFam" id="3.40.640.10:FF:000049">
    <property type="entry name" value="serine palmitoyltransferase 1 isoform X1"/>
    <property type="match status" value="1"/>
</dbReference>
<dbReference type="Gene3D" id="3.90.1150.10">
    <property type="entry name" value="Aspartate Aminotransferase, domain 1"/>
    <property type="match status" value="1"/>
</dbReference>
<dbReference type="Gene3D" id="3.40.640.10">
    <property type="entry name" value="Type I PLP-dependent aspartate aminotransferase-like (Major domain)"/>
    <property type="match status" value="1"/>
</dbReference>
<dbReference type="InterPro" id="IPR004839">
    <property type="entry name" value="Aminotransferase_I/II_large"/>
</dbReference>
<dbReference type="InterPro" id="IPR050087">
    <property type="entry name" value="AON_synthase_class-II"/>
</dbReference>
<dbReference type="InterPro" id="IPR015424">
    <property type="entry name" value="PyrdxlP-dep_Trfase"/>
</dbReference>
<dbReference type="InterPro" id="IPR015421">
    <property type="entry name" value="PyrdxlP-dep_Trfase_major"/>
</dbReference>
<dbReference type="InterPro" id="IPR015422">
    <property type="entry name" value="PyrdxlP-dep_Trfase_small"/>
</dbReference>
<dbReference type="PANTHER" id="PTHR13693">
    <property type="entry name" value="CLASS II AMINOTRANSFERASE/8-AMINO-7-OXONONANOATE SYNTHASE"/>
    <property type="match status" value="1"/>
</dbReference>
<dbReference type="PANTHER" id="PTHR13693:SF2">
    <property type="entry name" value="SERINE PALMITOYLTRANSFERASE 1"/>
    <property type="match status" value="1"/>
</dbReference>
<dbReference type="Pfam" id="PF00155">
    <property type="entry name" value="Aminotran_1_2"/>
    <property type="match status" value="1"/>
</dbReference>
<dbReference type="SUPFAM" id="SSF53383">
    <property type="entry name" value="PLP-dependent transferases"/>
    <property type="match status" value="1"/>
</dbReference>
<gene>
    <name type="primary">SPTLC1</name>
    <name type="synonym">LCB1</name>
    <name type="ORF">QtrA-11079</name>
</gene>
<feature type="chain" id="PRO_0000163854" description="Serine palmitoyltransferase 1">
    <location>
        <begin position="1"/>
        <end position="473"/>
    </location>
</feature>
<feature type="topological domain" description="Lumenal" evidence="5">
    <location>
        <begin position="1"/>
        <end position="15"/>
    </location>
</feature>
<feature type="transmembrane region" description="Helical" evidence="5">
    <location>
        <begin position="16"/>
        <end position="36"/>
    </location>
</feature>
<feature type="topological domain" description="Cytoplasmic" evidence="5">
    <location>
        <begin position="37"/>
        <end position="473"/>
    </location>
</feature>
<feature type="region of interest" description="Interaction with SPTLC2" evidence="2">
    <location>
        <begin position="1"/>
        <end position="66"/>
    </location>
</feature>
<feature type="modified residue" description="Phosphotyrosine; by ABL" evidence="2">
    <location>
        <position position="164"/>
    </location>
</feature>
<protein>
    <recommendedName>
        <fullName>Serine palmitoyltransferase 1</fullName>
        <ecNumber evidence="2">2.3.1.50</ecNumber>
    </recommendedName>
    <alternativeName>
        <fullName>Long chain base biosynthesis protein 1</fullName>
        <shortName>LCB 1</shortName>
    </alternativeName>
    <alternativeName>
        <fullName>Serine-palmitoyl-CoA transferase 1</fullName>
        <shortName>SPT 1</shortName>
        <shortName>SPT1</shortName>
    </alternativeName>
</protein>
<evidence type="ECO:0000250" key="1"/>
<evidence type="ECO:0000250" key="2">
    <source>
        <dbReference type="UniProtKB" id="O15269"/>
    </source>
</evidence>
<evidence type="ECO:0000250" key="3">
    <source>
        <dbReference type="UniProtKB" id="O35704"/>
    </source>
</evidence>
<evidence type="ECO:0000250" key="4">
    <source>
        <dbReference type="UniProtKB" id="Q3MHG1"/>
    </source>
</evidence>
<evidence type="ECO:0000255" key="5"/>
<evidence type="ECO:0000305" key="6"/>
<organism>
    <name type="scientific">Macaca fascicularis</name>
    <name type="common">Crab-eating macaque</name>
    <name type="synonym">Cynomolgus monkey</name>
    <dbReference type="NCBI Taxonomy" id="9541"/>
    <lineage>
        <taxon>Eukaryota</taxon>
        <taxon>Metazoa</taxon>
        <taxon>Chordata</taxon>
        <taxon>Craniata</taxon>
        <taxon>Vertebrata</taxon>
        <taxon>Euteleostomi</taxon>
        <taxon>Mammalia</taxon>
        <taxon>Eutheria</taxon>
        <taxon>Euarchontoglires</taxon>
        <taxon>Primates</taxon>
        <taxon>Haplorrhini</taxon>
        <taxon>Catarrhini</taxon>
        <taxon>Cercopithecidae</taxon>
        <taxon>Cercopithecinae</taxon>
        <taxon>Macaca</taxon>
    </lineage>
</organism>
<accession>Q60HD1</accession>